<accession>O80944</accession>
<accession>B3H474</accession>
<accession>Q3E6N6</accession>
<accession>Q3EBK9</accession>
<accession>Q93YR4</accession>
<organism>
    <name type="scientific">Arabidopsis thaliana</name>
    <name type="common">Mouse-ear cress</name>
    <dbReference type="NCBI Taxonomy" id="3702"/>
    <lineage>
        <taxon>Eukaryota</taxon>
        <taxon>Viridiplantae</taxon>
        <taxon>Streptophyta</taxon>
        <taxon>Embryophyta</taxon>
        <taxon>Tracheophyta</taxon>
        <taxon>Spermatophyta</taxon>
        <taxon>Magnoliopsida</taxon>
        <taxon>eudicotyledons</taxon>
        <taxon>Gunneridae</taxon>
        <taxon>Pentapetalae</taxon>
        <taxon>rosids</taxon>
        <taxon>malvids</taxon>
        <taxon>Brassicales</taxon>
        <taxon>Brassicaceae</taxon>
        <taxon>Camelineae</taxon>
        <taxon>Arabidopsis</taxon>
    </lineage>
</organism>
<feature type="initiator methionine" description="Removed" evidence="2">
    <location>
        <position position="1"/>
    </location>
</feature>
<feature type="chain" id="PRO_0000400312" description="Aldo-keto reductase family 4 member C8">
    <location>
        <begin position="2"/>
        <end position="311"/>
    </location>
</feature>
<feature type="active site" description="Proton donor" evidence="1">
    <location>
        <position position="48"/>
    </location>
</feature>
<feature type="binding site" evidence="3">
    <location>
        <begin position="23"/>
        <end position="24"/>
    </location>
    <ligand>
        <name>NADP(+)</name>
        <dbReference type="ChEBI" id="CHEBI:58349"/>
    </ligand>
</feature>
<feature type="binding site" evidence="3">
    <location>
        <position position="43"/>
    </location>
    <ligand>
        <name>NADP(+)</name>
        <dbReference type="ChEBI" id="CHEBI:58349"/>
    </ligand>
</feature>
<feature type="binding site" evidence="3">
    <location>
        <position position="110"/>
    </location>
    <ligand>
        <name>NADP(+)</name>
        <dbReference type="ChEBI" id="CHEBI:58349"/>
    </ligand>
</feature>
<feature type="binding site" evidence="3">
    <location>
        <begin position="154"/>
        <end position="155"/>
    </location>
    <ligand>
        <name>NADP(+)</name>
        <dbReference type="ChEBI" id="CHEBI:58349"/>
    </ligand>
</feature>
<feature type="binding site" evidence="3">
    <location>
        <position position="176"/>
    </location>
    <ligand>
        <name>NADP(+)</name>
        <dbReference type="ChEBI" id="CHEBI:58349"/>
    </ligand>
</feature>
<feature type="binding site" evidence="3">
    <location>
        <begin position="203"/>
        <end position="208"/>
    </location>
    <ligand>
        <name>NADP(+)</name>
        <dbReference type="ChEBI" id="CHEBI:58349"/>
    </ligand>
</feature>
<feature type="binding site" evidence="3">
    <location>
        <begin position="252"/>
        <end position="254"/>
    </location>
    <ligand>
        <name>NADP(+)</name>
        <dbReference type="ChEBI" id="CHEBI:58349"/>
    </ligand>
</feature>
<feature type="binding site" evidence="3">
    <location>
        <begin position="258"/>
        <end position="262"/>
    </location>
    <ligand>
        <name>NADP(+)</name>
        <dbReference type="ChEBI" id="CHEBI:58349"/>
    </ligand>
</feature>
<feature type="modified residue" description="N-acetylalanine" evidence="2">
    <location>
        <position position="2"/>
    </location>
</feature>
<feature type="splice variant" id="VSP_040012" description="In isoform 2." evidence="4">
    <original>EKFCRATE</original>
    <variation>AREVLPSY</variation>
    <location>
        <begin position="284"/>
        <end position="291"/>
    </location>
</feature>
<feature type="splice variant" id="VSP_040013" description="In isoform 3." evidence="4">
    <original>EKFCRAT</original>
    <variation>AKVLPSY</variation>
    <location>
        <begin position="284"/>
        <end position="290"/>
    </location>
</feature>
<feature type="splice variant" id="VSP_040014" description="In isoform 3." evidence="4">
    <location>
        <begin position="291"/>
        <end position="311"/>
    </location>
</feature>
<feature type="splice variant" id="VSP_040015" description="In isoform 2." evidence="4">
    <location>
        <begin position="292"/>
        <end position="311"/>
    </location>
</feature>
<feature type="strand" evidence="5">
    <location>
        <begin position="7"/>
        <end position="9"/>
    </location>
</feature>
<feature type="strand" evidence="5">
    <location>
        <begin position="15"/>
        <end position="22"/>
    </location>
</feature>
<feature type="helix" evidence="5">
    <location>
        <begin position="28"/>
        <end position="37"/>
    </location>
</feature>
<feature type="strand" evidence="5">
    <location>
        <begin position="41"/>
        <end position="43"/>
    </location>
</feature>
<feature type="helix" evidence="5">
    <location>
        <begin position="46"/>
        <end position="48"/>
    </location>
</feature>
<feature type="helix" evidence="5">
    <location>
        <begin position="51"/>
        <end position="63"/>
    </location>
</feature>
<feature type="helix" evidence="5">
    <location>
        <begin position="69"/>
        <end position="71"/>
    </location>
</feature>
<feature type="strand" evidence="5">
    <location>
        <begin position="73"/>
        <end position="78"/>
    </location>
</feature>
<feature type="helix" evidence="5">
    <location>
        <begin position="80"/>
        <end position="82"/>
    </location>
</feature>
<feature type="helix" evidence="5">
    <location>
        <begin position="87"/>
        <end position="99"/>
    </location>
</feature>
<feature type="strand" evidence="5">
    <location>
        <begin position="104"/>
        <end position="109"/>
    </location>
</feature>
<feature type="helix" evidence="5">
    <location>
        <begin position="124"/>
        <end position="126"/>
    </location>
</feature>
<feature type="helix" evidence="5">
    <location>
        <begin position="132"/>
        <end position="144"/>
    </location>
</feature>
<feature type="strand" evidence="5">
    <location>
        <begin position="147"/>
        <end position="155"/>
    </location>
</feature>
<feature type="helix" evidence="5">
    <location>
        <begin position="158"/>
        <end position="167"/>
    </location>
</feature>
<feature type="strand" evidence="5">
    <location>
        <begin position="173"/>
        <end position="178"/>
    </location>
</feature>
<feature type="helix" evidence="5">
    <location>
        <begin position="186"/>
        <end position="195"/>
    </location>
</feature>
<feature type="strand" evidence="5">
    <location>
        <begin position="198"/>
        <end position="203"/>
    </location>
</feature>
<feature type="turn" evidence="5">
    <location>
        <begin position="210"/>
        <end position="214"/>
    </location>
</feature>
<feature type="helix" evidence="5">
    <location>
        <begin position="215"/>
        <end position="218"/>
    </location>
</feature>
<feature type="helix" evidence="5">
    <location>
        <begin position="221"/>
        <end position="230"/>
    </location>
</feature>
<feature type="helix" evidence="5">
    <location>
        <begin position="234"/>
        <end position="244"/>
    </location>
</feature>
<feature type="helix" evidence="5">
    <location>
        <begin position="256"/>
        <end position="262"/>
    </location>
</feature>
<feature type="helix" evidence="5">
    <location>
        <begin position="272"/>
        <end position="275"/>
    </location>
</feature>
<feature type="helix" evidence="5">
    <location>
        <begin position="276"/>
        <end position="280"/>
    </location>
</feature>
<feature type="helix" evidence="5">
    <location>
        <begin position="290"/>
        <end position="292"/>
    </location>
</feature>
<feature type="turn" evidence="5">
    <location>
        <begin position="295"/>
        <end position="297"/>
    </location>
</feature>
<feature type="helix" evidence="5">
    <location>
        <begin position="303"/>
        <end position="306"/>
    </location>
</feature>
<feature type="turn" evidence="5">
    <location>
        <begin position="307"/>
        <end position="309"/>
    </location>
</feature>
<sequence length="311" mass="34685">MAAPIRFFELNTGAKLPCVGLGTYAMVATAIEQAIKIGYRHIDCASIYGNEKEIGGVLKKLIGDGFVKREELFITSKLWSNDHLPEDVPKALEKTLQDLQIDYVDLYLIHWPASLKKESLMPTPEMLTKPDITSTWKAMEALYDSGKARAIGVSNFSSKKLTDLLNVARVTPAVNQVECHPVWQQQGLHELCKSKGVHLSGYSPLGSQSKGEVRLKVLQNPIVTEVAEKLGKTTAQVALRWGLQTGHSVLPKSSSGARLKENLDVFDWSIPEDLFTKFSNIPQEKFCRATEFAHETHGFYKTIEELWDGEI</sequence>
<name>AKRC8_ARATH</name>
<evidence type="ECO:0000250" key="1"/>
<evidence type="ECO:0000250" key="2">
    <source>
        <dbReference type="UniProtKB" id="Q0PGJ6"/>
    </source>
</evidence>
<evidence type="ECO:0000269" key="3">
    <source>
    </source>
</evidence>
<evidence type="ECO:0000305" key="4"/>
<evidence type="ECO:0007829" key="5">
    <source>
        <dbReference type="PDB" id="3H7R"/>
    </source>
</evidence>
<reference key="1">
    <citation type="journal article" date="2009" name="J. Mol. Biol.">
        <title>Characterization of two novel aldo-keto reductases from Arabidopsis: expression patterns, broad substrate specificity, and an open active-site structure suggest a role in toxicant metabolism following stress.</title>
        <authorList>
            <person name="Simpson P.J."/>
            <person name="Tantitadapitak C."/>
            <person name="Reed A.M."/>
            <person name="Mather O.C."/>
            <person name="Bunce C.M."/>
            <person name="White S.A."/>
            <person name="Ride J.P."/>
        </authorList>
    </citation>
    <scope>NUCLEOTIDE SEQUENCE [MRNA] (ISOFORM 1)</scope>
    <scope>X-RAY CRYSTALLOGRAPHY (1.4 ANGSTROMS) IN COMPLEX WITH NADP</scope>
    <scope>FUNCTION</scope>
    <scope>BIOPHYSICOCHEMICAL PROPERTIES</scope>
    <scope>INDUCTION</scope>
    <source>
        <strain>cv. Columbia</strain>
        <tissue>Flower bud</tissue>
    </source>
</reference>
<reference key="2">
    <citation type="journal article" date="1999" name="Nature">
        <title>Sequence and analysis of chromosome 2 of the plant Arabidopsis thaliana.</title>
        <authorList>
            <person name="Lin X."/>
            <person name="Kaul S."/>
            <person name="Rounsley S.D."/>
            <person name="Shea T.P."/>
            <person name="Benito M.-I."/>
            <person name="Town C.D."/>
            <person name="Fujii C.Y."/>
            <person name="Mason T.M."/>
            <person name="Bowman C.L."/>
            <person name="Barnstead M.E."/>
            <person name="Feldblyum T.V."/>
            <person name="Buell C.R."/>
            <person name="Ketchum K.A."/>
            <person name="Lee J.J."/>
            <person name="Ronning C.M."/>
            <person name="Koo H.L."/>
            <person name="Moffat K.S."/>
            <person name="Cronin L.A."/>
            <person name="Shen M."/>
            <person name="Pai G."/>
            <person name="Van Aken S."/>
            <person name="Umayam L."/>
            <person name="Tallon L.J."/>
            <person name="Gill J.E."/>
            <person name="Adams M.D."/>
            <person name="Carrera A.J."/>
            <person name="Creasy T.H."/>
            <person name="Goodman H.M."/>
            <person name="Somerville C.R."/>
            <person name="Copenhaver G.P."/>
            <person name="Preuss D."/>
            <person name="Nierman W.C."/>
            <person name="White O."/>
            <person name="Eisen J.A."/>
            <person name="Salzberg S.L."/>
            <person name="Fraser C.M."/>
            <person name="Venter J.C."/>
        </authorList>
    </citation>
    <scope>NUCLEOTIDE SEQUENCE [LARGE SCALE GENOMIC DNA]</scope>
    <source>
        <strain>cv. Columbia</strain>
    </source>
</reference>
<reference key="3">
    <citation type="journal article" date="2017" name="Plant J.">
        <title>Araport11: a complete reannotation of the Arabidopsis thaliana reference genome.</title>
        <authorList>
            <person name="Cheng C.Y."/>
            <person name="Krishnakumar V."/>
            <person name="Chan A.P."/>
            <person name="Thibaud-Nissen F."/>
            <person name="Schobel S."/>
            <person name="Town C.D."/>
        </authorList>
    </citation>
    <scope>GENOME REANNOTATION</scope>
    <source>
        <strain>cv. Columbia</strain>
    </source>
</reference>
<reference key="4">
    <citation type="journal article" date="2003" name="Science">
        <title>Empirical analysis of transcriptional activity in the Arabidopsis genome.</title>
        <authorList>
            <person name="Yamada K."/>
            <person name="Lim J."/>
            <person name="Dale J.M."/>
            <person name="Chen H."/>
            <person name="Shinn P."/>
            <person name="Palm C.J."/>
            <person name="Southwick A.M."/>
            <person name="Wu H.C."/>
            <person name="Kim C.J."/>
            <person name="Nguyen M."/>
            <person name="Pham P.K."/>
            <person name="Cheuk R.F."/>
            <person name="Karlin-Newmann G."/>
            <person name="Liu S.X."/>
            <person name="Lam B."/>
            <person name="Sakano H."/>
            <person name="Wu T."/>
            <person name="Yu G."/>
            <person name="Miranda M."/>
            <person name="Quach H.L."/>
            <person name="Tripp M."/>
            <person name="Chang C.H."/>
            <person name="Lee J.M."/>
            <person name="Toriumi M.J."/>
            <person name="Chan M.M."/>
            <person name="Tang C.C."/>
            <person name="Onodera C.S."/>
            <person name="Deng J.M."/>
            <person name="Akiyama K."/>
            <person name="Ansari Y."/>
            <person name="Arakawa T."/>
            <person name="Banh J."/>
            <person name="Banno F."/>
            <person name="Bowser L."/>
            <person name="Brooks S.Y."/>
            <person name="Carninci P."/>
            <person name="Chao Q."/>
            <person name="Choy N."/>
            <person name="Enju A."/>
            <person name="Goldsmith A.D."/>
            <person name="Gurjal M."/>
            <person name="Hansen N.F."/>
            <person name="Hayashizaki Y."/>
            <person name="Johnson-Hopson C."/>
            <person name="Hsuan V.W."/>
            <person name="Iida K."/>
            <person name="Karnes M."/>
            <person name="Khan S."/>
            <person name="Koesema E."/>
            <person name="Ishida J."/>
            <person name="Jiang P.X."/>
            <person name="Jones T."/>
            <person name="Kawai J."/>
            <person name="Kamiya A."/>
            <person name="Meyers C."/>
            <person name="Nakajima M."/>
            <person name="Narusaka M."/>
            <person name="Seki M."/>
            <person name="Sakurai T."/>
            <person name="Satou M."/>
            <person name="Tamse R."/>
            <person name="Vaysberg M."/>
            <person name="Wallender E.K."/>
            <person name="Wong C."/>
            <person name="Yamamura Y."/>
            <person name="Yuan S."/>
            <person name="Shinozaki K."/>
            <person name="Davis R.W."/>
            <person name="Theologis A."/>
            <person name="Ecker J.R."/>
        </authorList>
    </citation>
    <scope>NUCLEOTIDE SEQUENCE [LARGE SCALE MRNA] (ISOFORM 1)</scope>
    <source>
        <strain>cv. Columbia</strain>
    </source>
</reference>
<proteinExistence type="evidence at protein level"/>
<protein>
    <recommendedName>
        <fullName>Aldo-keto reductase family 4 member C8</fullName>
        <ecNumber>1.1.1.-</ecNumber>
    </recommendedName>
</protein>
<gene>
    <name type="primary">AKR4C8</name>
    <name type="ordered locus">At2g37760</name>
    <name type="ORF">F13M22</name>
    <name type="ORF">T8P21.6</name>
</gene>
<keyword id="KW-0002">3D-structure</keyword>
<keyword id="KW-0007">Acetylation</keyword>
<keyword id="KW-0025">Alternative splicing</keyword>
<keyword id="KW-0216">Detoxification</keyword>
<keyword id="KW-0521">NADP</keyword>
<keyword id="KW-0560">Oxidoreductase</keyword>
<keyword id="KW-1185">Reference proteome</keyword>
<keyword id="KW-0346">Stress response</keyword>
<comment type="function">
    <text evidence="3">Oxidoreductase acting on a broad range of substrates: reduces ketosteroids, aromatic aldehydes, ketones, sugars and other aliphatic aldehydes, and oxidizes hydroxysteroids. May function as detoxifiying enzyme by reducing a range of toxic aldehydes and ketones produced during stress.</text>
</comment>
<comment type="biophysicochemical properties">
    <kinetics>
        <KM evidence="3">4.4 uM for 9,10-phenanthrenequinone</KM>
        <KM evidence="3">35 uM for isatin</KM>
        <KM evidence="3">1.6 mM for glyoxal</KM>
        <KM evidence="3">3.3 mM for methylglyoxal</KM>
        <KM evidence="3">22.4 mM for glyceraldehyde</KM>
    </kinetics>
</comment>
<comment type="alternative products">
    <event type="alternative splicing"/>
    <isoform>
        <id>O80944-1</id>
        <name>1</name>
        <sequence type="displayed"/>
    </isoform>
    <isoform>
        <id>O80944-2</id>
        <name>2</name>
        <sequence type="described" ref="VSP_040012 VSP_040015"/>
    </isoform>
    <isoform>
        <id>O80944-3</id>
        <name>3</name>
        <sequence type="described" ref="VSP_040013 VSP_040014"/>
    </isoform>
</comment>
<comment type="induction">
    <text evidence="3">By drought, salt and cold stresses.</text>
</comment>
<comment type="similarity">
    <text evidence="4">Belongs to the aldo/keto reductase family.</text>
</comment>
<dbReference type="EC" id="1.1.1.-"/>
<dbReference type="EMBL" id="AC004684">
    <property type="protein sequence ID" value="AAC23646.2"/>
    <property type="molecule type" value="Genomic_DNA"/>
</dbReference>
<dbReference type="EMBL" id="CP002685">
    <property type="protein sequence ID" value="AEC09443.1"/>
    <property type="molecule type" value="Genomic_DNA"/>
</dbReference>
<dbReference type="EMBL" id="CP002685">
    <property type="protein sequence ID" value="AEC09444.1"/>
    <property type="molecule type" value="Genomic_DNA"/>
</dbReference>
<dbReference type="EMBL" id="CP002685">
    <property type="protein sequence ID" value="AEC09445.1"/>
    <property type="molecule type" value="Genomic_DNA"/>
</dbReference>
<dbReference type="EMBL" id="CP002685">
    <property type="protein sequence ID" value="AEC09446.1"/>
    <property type="molecule type" value="Genomic_DNA"/>
</dbReference>
<dbReference type="EMBL" id="CP002685">
    <property type="protein sequence ID" value="AEC09447.1"/>
    <property type="molecule type" value="Genomic_DNA"/>
</dbReference>
<dbReference type="EMBL" id="AY059798">
    <property type="protein sequence ID" value="AAL24146.1"/>
    <property type="molecule type" value="mRNA"/>
</dbReference>
<dbReference type="EMBL" id="AY117171">
    <property type="protein sequence ID" value="AAM51246.1"/>
    <property type="molecule type" value="mRNA"/>
</dbReference>
<dbReference type="EMBL" id="DQ837653">
    <property type="protein sequence ID" value="ABH07514.1"/>
    <property type="molecule type" value="mRNA"/>
</dbReference>
<dbReference type="PIR" id="T02542">
    <property type="entry name" value="T02542"/>
</dbReference>
<dbReference type="RefSeq" id="NP_001078019.1">
    <molecule id="O80944-3"/>
    <property type="nucleotide sequence ID" value="NM_001084550.1"/>
</dbReference>
<dbReference type="RefSeq" id="NP_001118465.1">
    <molecule id="O80944-2"/>
    <property type="nucleotide sequence ID" value="NM_001124993.1"/>
</dbReference>
<dbReference type="RefSeq" id="NP_565871.1">
    <molecule id="O80944-1"/>
    <property type="nucleotide sequence ID" value="NM_129332.5"/>
</dbReference>
<dbReference type="RefSeq" id="NP_973626.2">
    <molecule id="O80944-1"/>
    <property type="nucleotide sequence ID" value="NM_201897.4"/>
</dbReference>
<dbReference type="RefSeq" id="NP_973627.1">
    <molecule id="O80944-3"/>
    <property type="nucleotide sequence ID" value="NM_201898.2"/>
</dbReference>
<dbReference type="PDB" id="3H7R">
    <property type="method" value="X-ray"/>
    <property type="resolution" value="1.40 A"/>
    <property type="chains" value="A=1-311"/>
</dbReference>
<dbReference type="PDBsum" id="3H7R"/>
<dbReference type="SMR" id="O80944"/>
<dbReference type="FunCoup" id="O80944">
    <property type="interactions" value="2127"/>
</dbReference>
<dbReference type="IntAct" id="O80944">
    <property type="interactions" value="1"/>
</dbReference>
<dbReference type="STRING" id="3702.O80944"/>
<dbReference type="GlyGen" id="O80944">
    <property type="glycosylation" value="1 site"/>
</dbReference>
<dbReference type="PaxDb" id="3702-AT2G37760.1"/>
<dbReference type="ProteomicsDB" id="244666">
    <molecule id="O80944-1"/>
</dbReference>
<dbReference type="EnsemblPlants" id="AT2G37760.1">
    <molecule id="O80944-1"/>
    <property type="protein sequence ID" value="AT2G37760.1"/>
    <property type="gene ID" value="AT2G37760"/>
</dbReference>
<dbReference type="EnsemblPlants" id="AT2G37760.2">
    <molecule id="O80944-1"/>
    <property type="protein sequence ID" value="AT2G37760.2"/>
    <property type="gene ID" value="AT2G37760"/>
</dbReference>
<dbReference type="EnsemblPlants" id="AT2G37760.3">
    <molecule id="O80944-3"/>
    <property type="protein sequence ID" value="AT2G37760.3"/>
    <property type="gene ID" value="AT2G37760"/>
</dbReference>
<dbReference type="EnsemblPlants" id="AT2G37760.4">
    <molecule id="O80944-3"/>
    <property type="protein sequence ID" value="AT2G37760.4"/>
    <property type="gene ID" value="AT2G37760"/>
</dbReference>
<dbReference type="EnsemblPlants" id="AT2G37760.5">
    <molecule id="O80944-2"/>
    <property type="protein sequence ID" value="AT2G37760.5"/>
    <property type="gene ID" value="AT2G37760"/>
</dbReference>
<dbReference type="GeneID" id="818353"/>
<dbReference type="Gramene" id="AT2G37760.1">
    <molecule id="O80944-1"/>
    <property type="protein sequence ID" value="AT2G37760.1"/>
    <property type="gene ID" value="AT2G37760"/>
</dbReference>
<dbReference type="Gramene" id="AT2G37760.2">
    <molecule id="O80944-1"/>
    <property type="protein sequence ID" value="AT2G37760.2"/>
    <property type="gene ID" value="AT2G37760"/>
</dbReference>
<dbReference type="Gramene" id="AT2G37760.3">
    <molecule id="O80944-3"/>
    <property type="protein sequence ID" value="AT2G37760.3"/>
    <property type="gene ID" value="AT2G37760"/>
</dbReference>
<dbReference type="Gramene" id="AT2G37760.4">
    <molecule id="O80944-3"/>
    <property type="protein sequence ID" value="AT2G37760.4"/>
    <property type="gene ID" value="AT2G37760"/>
</dbReference>
<dbReference type="Gramene" id="AT2G37760.5">
    <molecule id="O80944-2"/>
    <property type="protein sequence ID" value="AT2G37760.5"/>
    <property type="gene ID" value="AT2G37760"/>
</dbReference>
<dbReference type="KEGG" id="ath:AT2G37760"/>
<dbReference type="Araport" id="AT2G37760"/>
<dbReference type="TAIR" id="AT2G37760">
    <property type="gene designation" value="AKR4C8"/>
</dbReference>
<dbReference type="eggNOG" id="KOG1577">
    <property type="taxonomic scope" value="Eukaryota"/>
</dbReference>
<dbReference type="InParanoid" id="O80944"/>
<dbReference type="OMA" id="DMYLVHT"/>
<dbReference type="OrthoDB" id="416253at2759"/>
<dbReference type="PhylomeDB" id="O80944"/>
<dbReference type="BioCyc" id="ARA:AT2G37760-MONOMER"/>
<dbReference type="BioCyc" id="MetaCyc:AT2G37760-MONOMER"/>
<dbReference type="SABIO-RK" id="O80944"/>
<dbReference type="CD-CODE" id="4299E36E">
    <property type="entry name" value="Nucleolus"/>
</dbReference>
<dbReference type="EvolutionaryTrace" id="O80944"/>
<dbReference type="PRO" id="PR:O80944"/>
<dbReference type="Proteomes" id="UP000006548">
    <property type="component" value="Chromosome 2"/>
</dbReference>
<dbReference type="ExpressionAtlas" id="O80944">
    <property type="expression patterns" value="baseline and differential"/>
</dbReference>
<dbReference type="GO" id="GO:0005829">
    <property type="term" value="C:cytosol"/>
    <property type="evidence" value="ECO:0007005"/>
    <property type="project" value="TAIR"/>
</dbReference>
<dbReference type="GO" id="GO:0005783">
    <property type="term" value="C:endoplasmic reticulum"/>
    <property type="evidence" value="ECO:0007005"/>
    <property type="project" value="TAIR"/>
</dbReference>
<dbReference type="GO" id="GO:0004033">
    <property type="term" value="F:aldo-keto reductase (NADPH) activity"/>
    <property type="evidence" value="ECO:0000314"/>
    <property type="project" value="UniProtKB"/>
</dbReference>
<dbReference type="GO" id="GO:0070401">
    <property type="term" value="F:NADP+ binding"/>
    <property type="evidence" value="ECO:0000314"/>
    <property type="project" value="UniProtKB"/>
</dbReference>
<dbReference type="GO" id="GO:0016229">
    <property type="term" value="F:steroid dehydrogenase activity"/>
    <property type="evidence" value="ECO:0000314"/>
    <property type="project" value="UniProtKB"/>
</dbReference>
<dbReference type="GO" id="GO:0009409">
    <property type="term" value="P:response to cold"/>
    <property type="evidence" value="ECO:0000270"/>
    <property type="project" value="UniProtKB"/>
</dbReference>
<dbReference type="GO" id="GO:0009651">
    <property type="term" value="P:response to salt stress"/>
    <property type="evidence" value="ECO:0000270"/>
    <property type="project" value="UniProtKB"/>
</dbReference>
<dbReference type="GO" id="GO:0009636">
    <property type="term" value="P:response to toxic substance"/>
    <property type="evidence" value="ECO:0007669"/>
    <property type="project" value="UniProtKB-KW"/>
</dbReference>
<dbReference type="GO" id="GO:0009414">
    <property type="term" value="P:response to water deprivation"/>
    <property type="evidence" value="ECO:0000270"/>
    <property type="project" value="UniProtKB"/>
</dbReference>
<dbReference type="CDD" id="cd19125">
    <property type="entry name" value="AKR_AKR4C1-15"/>
    <property type="match status" value="1"/>
</dbReference>
<dbReference type="FunFam" id="3.20.20.100:FF:000080">
    <property type="entry name" value="Aldo-keto reductase family 4 member C8"/>
    <property type="match status" value="1"/>
</dbReference>
<dbReference type="Gene3D" id="3.20.20.100">
    <property type="entry name" value="NADP-dependent oxidoreductase domain"/>
    <property type="match status" value="1"/>
</dbReference>
<dbReference type="InterPro" id="IPR020471">
    <property type="entry name" value="AKR"/>
</dbReference>
<dbReference type="InterPro" id="IPR044498">
    <property type="entry name" value="AKR4C"/>
</dbReference>
<dbReference type="InterPro" id="IPR018170">
    <property type="entry name" value="Aldo/ket_reductase_CS"/>
</dbReference>
<dbReference type="InterPro" id="IPR023210">
    <property type="entry name" value="NADP_OxRdtase_dom"/>
</dbReference>
<dbReference type="InterPro" id="IPR036812">
    <property type="entry name" value="NADP_OxRdtase_dom_sf"/>
</dbReference>
<dbReference type="PANTHER" id="PTHR11732">
    <property type="entry name" value="ALDO/KETO REDUCTASE"/>
    <property type="match status" value="1"/>
</dbReference>
<dbReference type="Pfam" id="PF00248">
    <property type="entry name" value="Aldo_ket_red"/>
    <property type="match status" value="1"/>
</dbReference>
<dbReference type="PIRSF" id="PIRSF000097">
    <property type="entry name" value="AKR"/>
    <property type="match status" value="1"/>
</dbReference>
<dbReference type="PRINTS" id="PR00069">
    <property type="entry name" value="ALDKETRDTASE"/>
</dbReference>
<dbReference type="SUPFAM" id="SSF51430">
    <property type="entry name" value="NAD(P)-linked oxidoreductase"/>
    <property type="match status" value="1"/>
</dbReference>
<dbReference type="PROSITE" id="PS00798">
    <property type="entry name" value="ALDOKETO_REDUCTASE_1"/>
    <property type="match status" value="1"/>
</dbReference>
<dbReference type="PROSITE" id="PS00062">
    <property type="entry name" value="ALDOKETO_REDUCTASE_2"/>
    <property type="match status" value="1"/>
</dbReference>
<dbReference type="PROSITE" id="PS00063">
    <property type="entry name" value="ALDOKETO_REDUCTASE_3"/>
    <property type="match status" value="1"/>
</dbReference>